<protein>
    <recommendedName>
        <fullName evidence="1">Elongation factor P</fullName>
        <shortName evidence="1">EF-P</shortName>
    </recommendedName>
</protein>
<feature type="chain" id="PRO_0000452684" description="Elongation factor P">
    <location>
        <begin position="1"/>
        <end position="186"/>
    </location>
</feature>
<feature type="glycosylation site" description="N-alpha-linked (Rha) arginine" evidence="2">
    <location>
        <position position="32"/>
    </location>
</feature>
<feature type="mutagenesis site" description="Induces lethality when transfected in cells with deletion of efp gene." evidence="2">
    <original>R</original>
    <variation>A</variation>
    <variation>K</variation>
    <location>
        <position position="32"/>
    </location>
</feature>
<dbReference type="EMBL" id="LC059994">
    <property type="protein sequence ID" value="BAU19338.1"/>
    <property type="molecule type" value="Genomic_DNA"/>
</dbReference>
<dbReference type="RefSeq" id="WP_002213793.1">
    <property type="nucleotide sequence ID" value="NZ_WSPC01000005.1"/>
</dbReference>
<dbReference type="SMR" id="P0DUK0"/>
<dbReference type="GlyCosmos" id="P0DUK0">
    <property type="glycosylation" value="1 site, No reported glycans"/>
</dbReference>
<dbReference type="GeneID" id="93386255"/>
<dbReference type="OMA" id="WSVVEFQ"/>
<dbReference type="UniPathway" id="UPA00345"/>
<dbReference type="GO" id="GO:0005737">
    <property type="term" value="C:cytoplasm"/>
    <property type="evidence" value="ECO:0007669"/>
    <property type="project" value="UniProtKB-SubCell"/>
</dbReference>
<dbReference type="GO" id="GO:0003746">
    <property type="term" value="F:translation elongation factor activity"/>
    <property type="evidence" value="ECO:0007669"/>
    <property type="project" value="UniProtKB-UniRule"/>
</dbReference>
<dbReference type="GO" id="GO:0043043">
    <property type="term" value="P:peptide biosynthetic process"/>
    <property type="evidence" value="ECO:0007669"/>
    <property type="project" value="InterPro"/>
</dbReference>
<dbReference type="CDD" id="cd04470">
    <property type="entry name" value="S1_EF-P_repeat_1"/>
    <property type="match status" value="1"/>
</dbReference>
<dbReference type="CDD" id="cd05794">
    <property type="entry name" value="S1_EF-P_repeat_2"/>
    <property type="match status" value="1"/>
</dbReference>
<dbReference type="FunFam" id="2.30.30.30:FF:000003">
    <property type="entry name" value="Elongation factor P"/>
    <property type="match status" value="1"/>
</dbReference>
<dbReference type="FunFam" id="2.40.50.140:FF:000004">
    <property type="entry name" value="Elongation factor P"/>
    <property type="match status" value="1"/>
</dbReference>
<dbReference type="FunFam" id="2.40.50.140:FF:000009">
    <property type="entry name" value="Elongation factor P"/>
    <property type="match status" value="1"/>
</dbReference>
<dbReference type="Gene3D" id="2.30.30.30">
    <property type="match status" value="1"/>
</dbReference>
<dbReference type="Gene3D" id="2.40.50.140">
    <property type="entry name" value="Nucleic acid-binding proteins"/>
    <property type="match status" value="2"/>
</dbReference>
<dbReference type="HAMAP" id="MF_00141">
    <property type="entry name" value="EF_P"/>
    <property type="match status" value="1"/>
</dbReference>
<dbReference type="InterPro" id="IPR015365">
    <property type="entry name" value="Elong-fact-P_C"/>
</dbReference>
<dbReference type="InterPro" id="IPR012340">
    <property type="entry name" value="NA-bd_OB-fold"/>
</dbReference>
<dbReference type="InterPro" id="IPR014722">
    <property type="entry name" value="Rib_uL2_dom2"/>
</dbReference>
<dbReference type="InterPro" id="IPR020599">
    <property type="entry name" value="Transl_elong_fac_P/YeiP"/>
</dbReference>
<dbReference type="InterPro" id="IPR013185">
    <property type="entry name" value="Transl_elong_KOW-like"/>
</dbReference>
<dbReference type="InterPro" id="IPR001059">
    <property type="entry name" value="Transl_elong_P/YeiP_cen"/>
</dbReference>
<dbReference type="InterPro" id="IPR011768">
    <property type="entry name" value="Transl_elongation_fac_P"/>
</dbReference>
<dbReference type="InterPro" id="IPR008991">
    <property type="entry name" value="Translation_prot_SH3-like_sf"/>
</dbReference>
<dbReference type="NCBIfam" id="TIGR00038">
    <property type="entry name" value="efp"/>
    <property type="match status" value="1"/>
</dbReference>
<dbReference type="NCBIfam" id="NF001810">
    <property type="entry name" value="PRK00529.1"/>
    <property type="match status" value="1"/>
</dbReference>
<dbReference type="PANTHER" id="PTHR30053">
    <property type="entry name" value="ELONGATION FACTOR P"/>
    <property type="match status" value="1"/>
</dbReference>
<dbReference type="PANTHER" id="PTHR30053:SF12">
    <property type="entry name" value="ELONGATION FACTOR P (EF-P) FAMILY PROTEIN"/>
    <property type="match status" value="1"/>
</dbReference>
<dbReference type="Pfam" id="PF01132">
    <property type="entry name" value="EFP"/>
    <property type="match status" value="1"/>
</dbReference>
<dbReference type="Pfam" id="PF08207">
    <property type="entry name" value="EFP_N"/>
    <property type="match status" value="1"/>
</dbReference>
<dbReference type="Pfam" id="PF09285">
    <property type="entry name" value="Elong-fact-P_C"/>
    <property type="match status" value="1"/>
</dbReference>
<dbReference type="PIRSF" id="PIRSF005901">
    <property type="entry name" value="EF-P"/>
    <property type="match status" value="1"/>
</dbReference>
<dbReference type="SMART" id="SM01185">
    <property type="entry name" value="EFP"/>
    <property type="match status" value="1"/>
</dbReference>
<dbReference type="SMART" id="SM00841">
    <property type="entry name" value="Elong-fact-P_C"/>
    <property type="match status" value="1"/>
</dbReference>
<dbReference type="SUPFAM" id="SSF50249">
    <property type="entry name" value="Nucleic acid-binding proteins"/>
    <property type="match status" value="2"/>
</dbReference>
<dbReference type="SUPFAM" id="SSF50104">
    <property type="entry name" value="Translation proteins SH3-like domain"/>
    <property type="match status" value="1"/>
</dbReference>
<gene>
    <name evidence="1" type="primary">efp</name>
</gene>
<reference key="1">
    <citation type="journal article" date="2016" name="PLoS ONE">
        <title>Neisseria meningitidis translation elongation factor P and its active-site arginine residue are essential for cell viability.</title>
        <authorList>
            <person name="Yanagisawa T."/>
            <person name="Takahashi H."/>
            <person name="Suzuki T."/>
            <person name="Masuda A."/>
            <person name="Dohmae N."/>
            <person name="Yokoyama S."/>
        </authorList>
    </citation>
    <scope>NUCLEOTIDE SEQUENCE [GENOMIC DNA]</scope>
    <scope>DISRUPTION PHENOTYPE</scope>
    <scope>GLYCOSYLATION AT ARG-32</scope>
    <scope>MUTAGENESIS OF ARG-32</scope>
    <source>
        <strain>NIID280</strain>
    </source>
</reference>
<keyword id="KW-0963">Cytoplasm</keyword>
<keyword id="KW-0251">Elongation factor</keyword>
<keyword id="KW-0325">Glycoprotein</keyword>
<keyword id="KW-0648">Protein biosynthesis</keyword>
<organism>
    <name type="scientific">Neisseria meningitidis</name>
    <dbReference type="NCBI Taxonomy" id="487"/>
    <lineage>
        <taxon>Bacteria</taxon>
        <taxon>Pseudomonadati</taxon>
        <taxon>Pseudomonadota</taxon>
        <taxon>Betaproteobacteria</taxon>
        <taxon>Neisseriales</taxon>
        <taxon>Neisseriaceae</taxon>
        <taxon>Neisseria</taxon>
    </lineage>
</organism>
<name>EFP_NEIME</name>
<comment type="function">
    <text evidence="1">Involved in peptide bond synthesis. Stimulates efficient translation and peptide-bond synthesis on native or reconstituted 70S ribosomes in vitro. Probably functions indirectly by altering the affinity of the ribosome for aminoacyl-tRNA, thus increasing their reactivity as acceptors for peptidyl transferase.</text>
</comment>
<comment type="pathway">
    <text evidence="1">Protein biosynthesis; polypeptide chain elongation.</text>
</comment>
<comment type="subcellular location">
    <subcellularLocation>
        <location evidence="1">Cytoplasm</location>
    </subcellularLocation>
</comment>
<comment type="PTM">
    <text evidence="2">Glycosylated ar Arg-32 by EarP: arginine rhamnosylation is required for EF-P function and rescue of polyproline stalled ribosomes.</text>
</comment>
<comment type="disruption phenotype">
    <text evidence="2">Lethality.</text>
</comment>
<comment type="similarity">
    <text evidence="1">Belongs to the elongation factor P family.</text>
</comment>
<evidence type="ECO:0000255" key="1">
    <source>
        <dbReference type="HAMAP-Rule" id="MF_00141"/>
    </source>
</evidence>
<evidence type="ECO:0000269" key="2">
    <source>
    </source>
</evidence>
<accession>P0DUK0</accession>
<proteinExistence type="evidence at protein level"/>
<sequence length="186" mass="20894">MKTAQELRAGNVFMVGNDPMVVQKTEYIKGGRSSAKVSMKLKNLLTGAASETIYKADDKFDVVILSRKNCTYSYFADPMYVFMDEEFNQYEIEADNIGDALKFIVDGMEDQCEVTFYEGNPISVELPTIIVREVEYTEPAVKGDTSGKVMKTARLVGGTEIQVMSYIENGDKIEIDTRTGEFRKRA</sequence>